<dbReference type="EMBL" id="KJ412231">
    <property type="protein sequence ID" value="AHX39274.1"/>
    <property type="molecule type" value="Genomic_DNA"/>
</dbReference>
<dbReference type="PaxDb" id="4932-YER068C-A"/>
<dbReference type="EnsemblFungi" id="YER068C-A_mRNA">
    <property type="protein sequence ID" value="YER068C-A"/>
    <property type="gene ID" value="YER068C-A"/>
</dbReference>
<dbReference type="AGR" id="SGD:S000028749"/>
<dbReference type="SGD" id="S000028749">
    <property type="gene designation" value="YER068C-A"/>
</dbReference>
<dbReference type="HOGENOM" id="CLU_1807308_0_0_1"/>
<dbReference type="GO" id="GO:0016020">
    <property type="term" value="C:membrane"/>
    <property type="evidence" value="ECO:0007669"/>
    <property type="project" value="UniProtKB-SubCell"/>
</dbReference>
<protein>
    <recommendedName>
        <fullName evidence="2">Putative uncharacterized membrane protein YER068C-A</fullName>
    </recommendedName>
</protein>
<feature type="chain" id="PRO_0000430994" description="Putative uncharacterized membrane protein YER068C-A">
    <location>
        <begin position="1"/>
        <end position="143"/>
    </location>
</feature>
<feature type="transmembrane region" description="Helical; Name=1" evidence="1">
    <location>
        <begin position="20"/>
        <end position="39"/>
    </location>
</feature>
<feature type="transmembrane region" description="Helical; Name=2" evidence="1">
    <location>
        <begin position="113"/>
        <end position="135"/>
    </location>
</feature>
<reference key="1">
    <citation type="journal article" date="1997" name="Nature">
        <title>The nucleotide sequence of Saccharomyces cerevisiae chromosome V.</title>
        <authorList>
            <person name="Dietrich F.S."/>
            <person name="Mulligan J.T."/>
            <person name="Hennessy K.M."/>
            <person name="Yelton M.A."/>
            <person name="Allen E."/>
            <person name="Araujo R."/>
            <person name="Aviles E."/>
            <person name="Berno A."/>
            <person name="Brennan T."/>
            <person name="Carpenter J."/>
            <person name="Chen E."/>
            <person name="Cherry J.M."/>
            <person name="Chung E."/>
            <person name="Duncan M."/>
            <person name="Guzman E."/>
            <person name="Hartzell G."/>
            <person name="Hunicke-Smith S."/>
            <person name="Hyman R.W."/>
            <person name="Kayser A."/>
            <person name="Komp C."/>
            <person name="Lashkari D."/>
            <person name="Lew H."/>
            <person name="Lin D."/>
            <person name="Mosedale D."/>
            <person name="Nakahara K."/>
            <person name="Namath A."/>
            <person name="Norgren R."/>
            <person name="Oefner P."/>
            <person name="Oh C."/>
            <person name="Petel F.X."/>
            <person name="Roberts D."/>
            <person name="Sehl P."/>
            <person name="Schramm S."/>
            <person name="Shogren T."/>
            <person name="Smith V."/>
            <person name="Taylor P."/>
            <person name="Wei Y."/>
            <person name="Botstein D."/>
            <person name="Davis R.W."/>
        </authorList>
    </citation>
    <scope>NUCLEOTIDE SEQUENCE [LARGE SCALE GENOMIC DNA]</scope>
    <source>
        <strain>ATCC 204508 / S288c</strain>
    </source>
</reference>
<reference key="2">
    <citation type="journal article" date="2014" name="G3 (Bethesda)">
        <title>The reference genome sequence of Saccharomyces cerevisiae: Then and now.</title>
        <authorList>
            <person name="Engel S.R."/>
            <person name="Dietrich F.S."/>
            <person name="Fisk D.G."/>
            <person name="Binkley G."/>
            <person name="Balakrishnan R."/>
            <person name="Costanzo M.C."/>
            <person name="Dwight S.S."/>
            <person name="Hitz B.C."/>
            <person name="Karra K."/>
            <person name="Nash R.S."/>
            <person name="Weng S."/>
            <person name="Wong E.D."/>
            <person name="Lloyd P."/>
            <person name="Skrzypek M.S."/>
            <person name="Miyasato S.R."/>
            <person name="Simison M."/>
            <person name="Cherry J.M."/>
        </authorList>
    </citation>
    <scope>GENOME REANNOTATION</scope>
    <source>
        <strain>ATCC 204508 / S288c</strain>
    </source>
</reference>
<name>YE068_YEAST</name>
<organism>
    <name type="scientific">Saccharomyces cerevisiae (strain ATCC 204508 / S288c)</name>
    <name type="common">Baker's yeast</name>
    <dbReference type="NCBI Taxonomy" id="559292"/>
    <lineage>
        <taxon>Eukaryota</taxon>
        <taxon>Fungi</taxon>
        <taxon>Dikarya</taxon>
        <taxon>Ascomycota</taxon>
        <taxon>Saccharomycotina</taxon>
        <taxon>Saccharomycetes</taxon>
        <taxon>Saccharomycetales</taxon>
        <taxon>Saccharomycetaceae</taxon>
        <taxon>Saccharomyces</taxon>
    </lineage>
</organism>
<comment type="subcellular location">
    <subcellularLocation>
        <location evidence="1">Membrane</location>
        <topology evidence="1">Multi-pass membrane protein</topology>
    </subcellularLocation>
</comment>
<comment type="miscellaneous">
    <text evidence="2">Partially overlaps ARG5,6.</text>
</comment>
<comment type="caution">
    <text evidence="3">Product of a dubious gene prediction unlikely to encode a functional protein. Because of that it is not part of the S.cerevisiae S288c complete/reference proteome set.</text>
</comment>
<sequence>MAPPTLITANCCCETEVKYFKYCSTSLFVLILFNSWITVDLVAEKPLVDETYLFEYPTFFLVNATDGGALKGTDANPAMVDLFNEDTNFWNLEALSLFVETSKLADGIMMQTYFSLQISLSFAFSGICVKYITGLKNNIQKCS</sequence>
<evidence type="ECO:0000255" key="1"/>
<evidence type="ECO:0000305" key="2"/>
<evidence type="ECO:0000305" key="3">
    <source>
    </source>
</evidence>
<evidence type="ECO:0000312" key="4">
    <source>
        <dbReference type="SGD" id="S000028749"/>
    </source>
</evidence>
<accession>A0A023PXC7</accession>
<keyword id="KW-0472">Membrane</keyword>
<keyword id="KW-0812">Transmembrane</keyword>
<keyword id="KW-1133">Transmembrane helix</keyword>
<proteinExistence type="uncertain"/>
<gene>
    <name evidence="4" type="ordered locus">YER068C-A</name>
</gene>